<dbReference type="EMBL" id="BR000253">
    <property type="protein sequence ID" value="FAA00257.1"/>
    <property type="molecule type" value="Genomic_DNA"/>
</dbReference>
<dbReference type="EMBL" id="AP004087">
    <property type="protein sequence ID" value="BAD25144.1"/>
    <property type="molecule type" value="Genomic_DNA"/>
</dbReference>
<dbReference type="EMBL" id="AP008208">
    <property type="protein sequence ID" value="BAF08011.1"/>
    <property type="molecule type" value="Genomic_DNA"/>
</dbReference>
<dbReference type="EMBL" id="AP014958">
    <property type="protein sequence ID" value="BAS77314.1"/>
    <property type="molecule type" value="Genomic_DNA"/>
</dbReference>
<dbReference type="EMBL" id="CM000139">
    <property type="protein sequence ID" value="EEE56445.1"/>
    <property type="molecule type" value="Genomic_DNA"/>
</dbReference>
<dbReference type="EMBL" id="AK100530">
    <property type="protein sequence ID" value="BAG94643.1"/>
    <property type="molecule type" value="mRNA"/>
</dbReference>
<dbReference type="RefSeq" id="XP_015626716.1">
    <property type="nucleotide sequence ID" value="XM_015771230.1"/>
</dbReference>
<dbReference type="SMR" id="Q6H805"/>
<dbReference type="FunCoup" id="Q6H805">
    <property type="interactions" value="128"/>
</dbReference>
<dbReference type="STRING" id="39947.Q6H805"/>
<dbReference type="iPTMnet" id="Q6H805"/>
<dbReference type="PaxDb" id="39947-Q6H805"/>
<dbReference type="EnsemblPlants" id="Os02t0182100-01">
    <property type="protein sequence ID" value="Os02t0182100-01"/>
    <property type="gene ID" value="Os02g0182100"/>
</dbReference>
<dbReference type="Gramene" id="Os02t0182100-01">
    <property type="protein sequence ID" value="Os02t0182100-01"/>
    <property type="gene ID" value="Os02g0182100"/>
</dbReference>
<dbReference type="KEGG" id="dosa:Os02g0182100"/>
<dbReference type="eggNOG" id="KOG1601">
    <property type="taxonomic scope" value="Eukaryota"/>
</dbReference>
<dbReference type="HOGENOM" id="CLU_024359_0_2_1"/>
<dbReference type="InParanoid" id="Q6H805"/>
<dbReference type="OMA" id="YIDGDWE"/>
<dbReference type="OrthoDB" id="60033at2759"/>
<dbReference type="Proteomes" id="UP000000763">
    <property type="component" value="Chromosome 2"/>
</dbReference>
<dbReference type="Proteomes" id="UP000007752">
    <property type="component" value="Chromosome 2"/>
</dbReference>
<dbReference type="Proteomes" id="UP000059680">
    <property type="component" value="Chromosome 2"/>
</dbReference>
<dbReference type="GO" id="GO:0005634">
    <property type="term" value="C:nucleus"/>
    <property type="evidence" value="ECO:0007669"/>
    <property type="project" value="UniProtKB-SubCell"/>
</dbReference>
<dbReference type="GO" id="GO:0003677">
    <property type="term" value="F:DNA binding"/>
    <property type="evidence" value="ECO:0007669"/>
    <property type="project" value="UniProtKB-KW"/>
</dbReference>
<dbReference type="GO" id="GO:0003700">
    <property type="term" value="F:DNA-binding transcription factor activity"/>
    <property type="evidence" value="ECO:0007669"/>
    <property type="project" value="InterPro"/>
</dbReference>
<dbReference type="GO" id="GO:0009736">
    <property type="term" value="P:cytokinin-activated signaling pathway"/>
    <property type="evidence" value="ECO:0007669"/>
    <property type="project" value="UniProtKB-KW"/>
</dbReference>
<dbReference type="GO" id="GO:0000160">
    <property type="term" value="P:phosphorelay signal transduction system"/>
    <property type="evidence" value="ECO:0007669"/>
    <property type="project" value="UniProtKB-KW"/>
</dbReference>
<dbReference type="CDD" id="cd17584">
    <property type="entry name" value="REC_typeB_ARR-like"/>
    <property type="match status" value="1"/>
</dbReference>
<dbReference type="FunFam" id="1.10.10.60:FF:000007">
    <property type="entry name" value="Two-component response regulator"/>
    <property type="match status" value="1"/>
</dbReference>
<dbReference type="FunFam" id="3.40.50.2300:FF:000132">
    <property type="entry name" value="Two-component response regulator"/>
    <property type="match status" value="1"/>
</dbReference>
<dbReference type="Gene3D" id="3.40.50.2300">
    <property type="match status" value="1"/>
</dbReference>
<dbReference type="Gene3D" id="1.10.10.60">
    <property type="entry name" value="Homeodomain-like"/>
    <property type="match status" value="1"/>
</dbReference>
<dbReference type="InterPro" id="IPR045279">
    <property type="entry name" value="ARR-like"/>
</dbReference>
<dbReference type="InterPro" id="IPR011006">
    <property type="entry name" value="CheY-like_superfamily"/>
</dbReference>
<dbReference type="InterPro" id="IPR009057">
    <property type="entry name" value="Homeodomain-like_sf"/>
</dbReference>
<dbReference type="InterPro" id="IPR017930">
    <property type="entry name" value="Myb_dom"/>
</dbReference>
<dbReference type="InterPro" id="IPR006447">
    <property type="entry name" value="Myb_dom_plants"/>
</dbReference>
<dbReference type="InterPro" id="IPR017053">
    <property type="entry name" value="Response_reg_B-typ_pln"/>
</dbReference>
<dbReference type="InterPro" id="IPR001005">
    <property type="entry name" value="SANT/Myb"/>
</dbReference>
<dbReference type="InterPro" id="IPR001789">
    <property type="entry name" value="Sig_transdc_resp-reg_receiver"/>
</dbReference>
<dbReference type="NCBIfam" id="TIGR01557">
    <property type="entry name" value="myb_SHAQKYF"/>
    <property type="match status" value="1"/>
</dbReference>
<dbReference type="PANTHER" id="PTHR43874">
    <property type="entry name" value="TWO-COMPONENT RESPONSE REGULATOR"/>
    <property type="match status" value="1"/>
</dbReference>
<dbReference type="PANTHER" id="PTHR43874:SF7">
    <property type="entry name" value="TWO-COMPONENT RESPONSE REGULATOR ARR10"/>
    <property type="match status" value="1"/>
</dbReference>
<dbReference type="Pfam" id="PF00249">
    <property type="entry name" value="Myb_DNA-binding"/>
    <property type="match status" value="1"/>
</dbReference>
<dbReference type="Pfam" id="PF00072">
    <property type="entry name" value="Response_reg"/>
    <property type="match status" value="1"/>
</dbReference>
<dbReference type="PIRSF" id="PIRSF036392">
    <property type="entry name" value="RR_ARR_type-B"/>
    <property type="match status" value="1"/>
</dbReference>
<dbReference type="SMART" id="SM00448">
    <property type="entry name" value="REC"/>
    <property type="match status" value="1"/>
</dbReference>
<dbReference type="SUPFAM" id="SSF52172">
    <property type="entry name" value="CheY-like"/>
    <property type="match status" value="1"/>
</dbReference>
<dbReference type="SUPFAM" id="SSF46689">
    <property type="entry name" value="Homeodomain-like"/>
    <property type="match status" value="1"/>
</dbReference>
<dbReference type="PROSITE" id="PS51294">
    <property type="entry name" value="HTH_MYB"/>
    <property type="match status" value="1"/>
</dbReference>
<dbReference type="PROSITE" id="PS50110">
    <property type="entry name" value="RESPONSE_REGULATORY"/>
    <property type="match status" value="1"/>
</dbReference>
<gene>
    <name evidence="8" type="primary">RR24</name>
    <name evidence="7" type="synonym">ORR4</name>
    <name evidence="11" type="ordered locus">Os02g0182100</name>
    <name evidence="9" type="ordered locus">LOC_Os02g08500</name>
    <name evidence="10" type="ORF">OJ1297_C09.26</name>
    <name evidence="12" type="ORF">OsJ_05635</name>
</gene>
<feature type="chain" id="PRO_0000433846" description="Two-component response regulator ORR24">
    <location>
        <begin position="1"/>
        <end position="626"/>
    </location>
</feature>
<feature type="domain" description="Response regulatory" evidence="2">
    <location>
        <begin position="30"/>
        <end position="145"/>
    </location>
</feature>
<feature type="DNA-binding region" description="Myb-like GARP" evidence="3">
    <location>
        <begin position="210"/>
        <end position="269"/>
    </location>
</feature>
<feature type="region of interest" description="Disordered" evidence="4">
    <location>
        <begin position="1"/>
        <end position="22"/>
    </location>
</feature>
<feature type="region of interest" description="Disordered" evidence="4">
    <location>
        <begin position="151"/>
        <end position="215"/>
    </location>
</feature>
<feature type="region of interest" description="Disordered" evidence="4">
    <location>
        <begin position="402"/>
        <end position="440"/>
    </location>
</feature>
<feature type="compositionally biased region" description="Gly residues" evidence="4">
    <location>
        <begin position="9"/>
        <end position="22"/>
    </location>
</feature>
<feature type="compositionally biased region" description="Basic and acidic residues" evidence="4">
    <location>
        <begin position="151"/>
        <end position="162"/>
    </location>
</feature>
<feature type="compositionally biased region" description="Acidic residues" evidence="4">
    <location>
        <begin position="191"/>
        <end position="202"/>
    </location>
</feature>
<feature type="compositionally biased region" description="Polar residues" evidence="4">
    <location>
        <begin position="402"/>
        <end position="421"/>
    </location>
</feature>
<feature type="modified residue" description="4-aspartylphosphate" evidence="2">
    <location>
        <position position="81"/>
    </location>
</feature>
<proteinExistence type="evidence at transcript level"/>
<evidence type="ECO:0000250" key="1">
    <source>
        <dbReference type="UniProtKB" id="Q940D0"/>
    </source>
</evidence>
<evidence type="ECO:0000255" key="2">
    <source>
        <dbReference type="PROSITE-ProRule" id="PRU00169"/>
    </source>
</evidence>
<evidence type="ECO:0000255" key="3">
    <source>
        <dbReference type="PROSITE-ProRule" id="PRU00625"/>
    </source>
</evidence>
<evidence type="ECO:0000256" key="4">
    <source>
        <dbReference type="SAM" id="MobiDB-lite"/>
    </source>
</evidence>
<evidence type="ECO:0000269" key="5">
    <source>
    </source>
</evidence>
<evidence type="ECO:0000303" key="6">
    <source>
    </source>
</evidence>
<evidence type="ECO:0000303" key="7">
    <source>
    </source>
</evidence>
<evidence type="ECO:0000303" key="8">
    <source>
    </source>
</evidence>
<evidence type="ECO:0000305" key="9"/>
<evidence type="ECO:0000312" key="10">
    <source>
        <dbReference type="EMBL" id="BAD25144.1"/>
    </source>
</evidence>
<evidence type="ECO:0000312" key="11">
    <source>
        <dbReference type="EMBL" id="BAF08011.1"/>
    </source>
</evidence>
<evidence type="ECO:0000312" key="12">
    <source>
        <dbReference type="EMBL" id="EEE56445.1"/>
    </source>
</evidence>
<comment type="function">
    <text evidence="1">Transcriptional activator that binds specific DNA sequence. Functions as a response regulator involved in His-to-Asp phosphorelay signal transduction system. Phosphorylation of the Asp residue in the receiver domain activates the ability of the protein to promote the transcription of target genes. May directly activate some type-A response regulators in response to cytokinins.</text>
</comment>
<comment type="subcellular location">
    <subcellularLocation>
        <location evidence="3">Nucleus</location>
    </subcellularLocation>
</comment>
<comment type="PTM">
    <text evidence="9">Two-component system major event consists of a His-to-Asp phosphorelay between a sensor histidine kinase (HK) and a response regulator (RR). In plants, the His-to-Asp phosphorelay involves an additional intermediate named Histidine-containing phosphotransfer protein (HPt). This multistep phosphorelay consists of a His-Asp-His-Asp sequential transfer of a phosphate group between first a His and an Asp of the HK protein, followed by the transfer to a conserved His of the HPt protein and finally the transfer to an Asp in the receiver domain of the RR protein.</text>
</comment>
<comment type="disruption phenotype">
    <text evidence="5">Dwarf, narrow leaf, lesion mimic, low tillering, late heading and low fertility phenotypes.</text>
</comment>
<comment type="similarity">
    <text evidence="9">Belongs to the ARR family. Type-B subfamily.</text>
</comment>
<name>ORR24_ORYSJ</name>
<accession>Q6H805</accession>
<accession>A0A0P0VFL9</accession>
<organism>
    <name type="scientific">Oryza sativa subsp. japonica</name>
    <name type="common">Rice</name>
    <dbReference type="NCBI Taxonomy" id="39947"/>
    <lineage>
        <taxon>Eukaryota</taxon>
        <taxon>Viridiplantae</taxon>
        <taxon>Streptophyta</taxon>
        <taxon>Embryophyta</taxon>
        <taxon>Tracheophyta</taxon>
        <taxon>Spermatophyta</taxon>
        <taxon>Magnoliopsida</taxon>
        <taxon>Liliopsida</taxon>
        <taxon>Poales</taxon>
        <taxon>Poaceae</taxon>
        <taxon>BOP clade</taxon>
        <taxon>Oryzoideae</taxon>
        <taxon>Oryzeae</taxon>
        <taxon>Oryzinae</taxon>
        <taxon>Oryza</taxon>
        <taxon>Oryza sativa</taxon>
    </lineage>
</organism>
<reference key="1">
    <citation type="journal article" date="2006" name="Gene">
        <title>Identification and characterization of cytokinin-signalling gene families in rice.</title>
        <authorList>
            <person name="Ito Y."/>
            <person name="Kurata N."/>
        </authorList>
    </citation>
    <scope>NUCLEOTIDE SEQUENCE [GENOMIC DNA]</scope>
    <source>
        <strain>cv. Nipponbare</strain>
    </source>
</reference>
<reference key="2">
    <citation type="journal article" date="2005" name="Nature">
        <title>The map-based sequence of the rice genome.</title>
        <authorList>
            <consortium name="International rice genome sequencing project (IRGSP)"/>
        </authorList>
    </citation>
    <scope>NUCLEOTIDE SEQUENCE [LARGE SCALE GENOMIC DNA]</scope>
    <source>
        <strain>cv. Nipponbare</strain>
    </source>
</reference>
<reference key="3">
    <citation type="journal article" date="2008" name="Nucleic Acids Res.">
        <title>The rice annotation project database (RAP-DB): 2008 update.</title>
        <authorList>
            <consortium name="The rice annotation project (RAP)"/>
        </authorList>
    </citation>
    <scope>GENOME REANNOTATION</scope>
    <source>
        <strain>cv. Nipponbare</strain>
    </source>
</reference>
<reference key="4">
    <citation type="journal article" date="2013" name="Rice">
        <title>Improvement of the Oryza sativa Nipponbare reference genome using next generation sequence and optical map data.</title>
        <authorList>
            <person name="Kawahara Y."/>
            <person name="de la Bastide M."/>
            <person name="Hamilton J.P."/>
            <person name="Kanamori H."/>
            <person name="McCombie W.R."/>
            <person name="Ouyang S."/>
            <person name="Schwartz D.C."/>
            <person name="Tanaka T."/>
            <person name="Wu J."/>
            <person name="Zhou S."/>
            <person name="Childs K.L."/>
            <person name="Davidson R.M."/>
            <person name="Lin H."/>
            <person name="Quesada-Ocampo L."/>
            <person name="Vaillancourt B."/>
            <person name="Sakai H."/>
            <person name="Lee S.S."/>
            <person name="Kim J."/>
            <person name="Numa H."/>
            <person name="Itoh T."/>
            <person name="Buell C.R."/>
            <person name="Matsumoto T."/>
        </authorList>
    </citation>
    <scope>GENOME REANNOTATION</scope>
    <source>
        <strain>cv. Nipponbare</strain>
    </source>
</reference>
<reference key="5">
    <citation type="journal article" date="2005" name="PLoS Biol.">
        <title>The genomes of Oryza sativa: a history of duplications.</title>
        <authorList>
            <person name="Yu J."/>
            <person name="Wang J."/>
            <person name="Lin W."/>
            <person name="Li S."/>
            <person name="Li H."/>
            <person name="Zhou J."/>
            <person name="Ni P."/>
            <person name="Dong W."/>
            <person name="Hu S."/>
            <person name="Zeng C."/>
            <person name="Zhang J."/>
            <person name="Zhang Y."/>
            <person name="Li R."/>
            <person name="Xu Z."/>
            <person name="Li S."/>
            <person name="Li X."/>
            <person name="Zheng H."/>
            <person name="Cong L."/>
            <person name="Lin L."/>
            <person name="Yin J."/>
            <person name="Geng J."/>
            <person name="Li G."/>
            <person name="Shi J."/>
            <person name="Liu J."/>
            <person name="Lv H."/>
            <person name="Li J."/>
            <person name="Wang J."/>
            <person name="Deng Y."/>
            <person name="Ran L."/>
            <person name="Shi X."/>
            <person name="Wang X."/>
            <person name="Wu Q."/>
            <person name="Li C."/>
            <person name="Ren X."/>
            <person name="Wang J."/>
            <person name="Wang X."/>
            <person name="Li D."/>
            <person name="Liu D."/>
            <person name="Zhang X."/>
            <person name="Ji Z."/>
            <person name="Zhao W."/>
            <person name="Sun Y."/>
            <person name="Zhang Z."/>
            <person name="Bao J."/>
            <person name="Han Y."/>
            <person name="Dong L."/>
            <person name="Ji J."/>
            <person name="Chen P."/>
            <person name="Wu S."/>
            <person name="Liu J."/>
            <person name="Xiao Y."/>
            <person name="Bu D."/>
            <person name="Tan J."/>
            <person name="Yang L."/>
            <person name="Ye C."/>
            <person name="Zhang J."/>
            <person name="Xu J."/>
            <person name="Zhou Y."/>
            <person name="Yu Y."/>
            <person name="Zhang B."/>
            <person name="Zhuang S."/>
            <person name="Wei H."/>
            <person name="Liu B."/>
            <person name="Lei M."/>
            <person name="Yu H."/>
            <person name="Li Y."/>
            <person name="Xu H."/>
            <person name="Wei S."/>
            <person name="He X."/>
            <person name="Fang L."/>
            <person name="Zhang Z."/>
            <person name="Zhang Y."/>
            <person name="Huang X."/>
            <person name="Su Z."/>
            <person name="Tong W."/>
            <person name="Li J."/>
            <person name="Tong Z."/>
            <person name="Li S."/>
            <person name="Ye J."/>
            <person name="Wang L."/>
            <person name="Fang L."/>
            <person name="Lei T."/>
            <person name="Chen C.-S."/>
            <person name="Chen H.-C."/>
            <person name="Xu Z."/>
            <person name="Li H."/>
            <person name="Huang H."/>
            <person name="Zhang F."/>
            <person name="Xu H."/>
            <person name="Li N."/>
            <person name="Zhao C."/>
            <person name="Li S."/>
            <person name="Dong L."/>
            <person name="Huang Y."/>
            <person name="Li L."/>
            <person name="Xi Y."/>
            <person name="Qi Q."/>
            <person name="Li W."/>
            <person name="Zhang B."/>
            <person name="Hu W."/>
            <person name="Zhang Y."/>
            <person name="Tian X."/>
            <person name="Jiao Y."/>
            <person name="Liang X."/>
            <person name="Jin J."/>
            <person name="Gao L."/>
            <person name="Zheng W."/>
            <person name="Hao B."/>
            <person name="Liu S.-M."/>
            <person name="Wang W."/>
            <person name="Yuan L."/>
            <person name="Cao M."/>
            <person name="McDermott J."/>
            <person name="Samudrala R."/>
            <person name="Wang J."/>
            <person name="Wong G.K.-S."/>
            <person name="Yang H."/>
        </authorList>
    </citation>
    <scope>NUCLEOTIDE SEQUENCE [LARGE SCALE GENOMIC DNA]</scope>
    <source>
        <strain>cv. Nipponbare</strain>
    </source>
</reference>
<reference key="6">
    <citation type="journal article" date="2003" name="Science">
        <title>Collection, mapping, and annotation of over 28,000 cDNA clones from japonica rice.</title>
        <authorList>
            <consortium name="The rice full-length cDNA consortium"/>
        </authorList>
    </citation>
    <scope>NUCLEOTIDE SEQUENCE [LARGE SCALE MRNA]</scope>
    <source>
        <strain>cv. Nipponbare</strain>
    </source>
</reference>
<reference key="7">
    <citation type="journal article" date="2006" name="Plant Physiol.">
        <title>Whole-genome analysis of Oryza sativa reveals similar architecture of two-component signaling machinery with Arabidopsis.</title>
        <authorList>
            <person name="Pareek A."/>
            <person name="Singh A."/>
            <person name="Kumar M."/>
            <person name="Kushwaha H.R."/>
            <person name="Lynn A.M."/>
            <person name="Singla-Pareek S.L."/>
        </authorList>
    </citation>
    <scope>DISRUPTION PHENOTYPE</scope>
</reference>
<reference key="8">
    <citation type="journal article" date="2007" name="Plant Physiol.">
        <title>Nomenclature for two-component signaling elements of rice.</title>
        <authorList>
            <person name="Schaller G.E."/>
            <person name="Doi K."/>
            <person name="Hwang I."/>
            <person name="Kieber J.J."/>
            <person name="Khurana J.P."/>
            <person name="Kurata N."/>
            <person name="Mizuno T."/>
            <person name="Pareek A."/>
            <person name="Shiu S.H."/>
            <person name="Wu P."/>
            <person name="Yip W.K."/>
        </authorList>
    </citation>
    <scope>GENE FAMILY</scope>
    <scope>NOMENCLATURE</scope>
</reference>
<keyword id="KW-0010">Activator</keyword>
<keyword id="KW-0932">Cytokinin signaling pathway</keyword>
<keyword id="KW-0238">DNA-binding</keyword>
<keyword id="KW-0539">Nucleus</keyword>
<keyword id="KW-0597">Phosphoprotein</keyword>
<keyword id="KW-1185">Reference proteome</keyword>
<keyword id="KW-0804">Transcription</keyword>
<keyword id="KW-0805">Transcription regulation</keyword>
<keyword id="KW-0902">Two-component regulatory system</keyword>
<sequence>MTVEERQGRVGGHGVSGGGGGRDQFPVGMRVLAVDDDPTCLKILENLLLRCQYHVTTTGQAATALKLLRENKDQFDLVISDVHMPDMDGFKLLELVGLEMDLPVIMLSANGETQTVMKGITHGACDYLLKPVRLEQLRTIWQHVIRRKNCDAKNRGNDDDAGQKAQGMNNEGESIGANRNKRQSRKSRDENGDDGDDSDENSNENGDSSTQKKPRVVWSVELHRKFVAAVNQLGIEKAVPKKILDLMNVENITRENVASHLQKYRLYLKRLSTDASRQANLAAAFGGRNPAYINMNSFGNYNAYGRYRTVPTAGHTQANNILTRMNSPSAFGVHGLLHSQPIQLGHAQNNLSTSLNDLGGLNNGNMIRGAQMSTILTGPSGNSFPNISNGAPLATANRSLQPLESSNQQHLSRVHSSSADPFSTLVGESPQFPDLGRTTNTWQTAVPSNIQDRGHNDNMSQATLHMNGPKIEPVSSFTSSNQIPLLGNEMQGQVASLASNVPIAFNQDTSPFNYGSSTNSRDMLNNSHVFSNSSINTSLPNLSLDNPAVPRQTLDRGNTGIVSPMQDGRIHHQAVSNQLNYNDDLMRTTGLQRGLSGGLDDIVVDMFRPDREDDGVPYIDGDWELV</sequence>
<protein>
    <recommendedName>
        <fullName evidence="9">Two-component response regulator ORR24</fullName>
    </recommendedName>
    <alternativeName>
        <fullName evidence="6">OsRRB2</fullName>
    </alternativeName>
</protein>